<reference key="1">
    <citation type="journal article" date="2005" name="J. Gen. Virol.">
        <title>Taro vein chlorosis virus: characterization and variability of a new nucleorhabdovirus.</title>
        <authorList>
            <person name="Revill P."/>
            <person name="Trinh X."/>
            <person name="Dale J."/>
            <person name="Harding R."/>
        </authorList>
    </citation>
    <scope>NUCLEOTIDE SEQUENCE [GENOMIC RNA]</scope>
</reference>
<evidence type="ECO:0000250" key="1">
    <source>
        <dbReference type="UniProtKB" id="P03523"/>
    </source>
</evidence>
<evidence type="ECO:0000250" key="2">
    <source>
        <dbReference type="UniProtKB" id="P28887"/>
    </source>
</evidence>
<evidence type="ECO:0000255" key="3">
    <source>
        <dbReference type="PROSITE-ProRule" id="PRU00539"/>
    </source>
</evidence>
<evidence type="ECO:0000305" key="4"/>
<proteinExistence type="inferred from homology"/>
<organism>
    <name type="scientific">Taro vein chlorosis virus</name>
    <name type="common">TAVCV</name>
    <dbReference type="NCBI Taxonomy" id="2749935"/>
    <lineage>
        <taxon>Viruses</taxon>
        <taxon>Riboviria</taxon>
        <taxon>Orthornavirae</taxon>
        <taxon>Negarnaviricota</taxon>
        <taxon>Haploviricotina</taxon>
        <taxon>Monjiviricetes</taxon>
        <taxon>Mononegavirales</taxon>
        <taxon>Rhabdoviridae</taxon>
        <taxon>Betarhabdovirinae</taxon>
        <taxon>Alphanucleorhabdovirus</taxon>
    </lineage>
</organism>
<organismHost>
    <name type="scientific">Colocasia esculenta</name>
    <name type="common">Wild taro</name>
    <name type="synonym">Arum esculentum</name>
    <dbReference type="NCBI Taxonomy" id="4460"/>
</organismHost>
<comment type="function">
    <text evidence="1">RNA-directed RNA polymerase that catalyzes the transcription of viral mRNAs, their capping and polyadenylation. The template is composed of the viral RNA tightly encapsidated by the nucleoprotein (N). The viral polymerase binds to the genomic RNA at the 3' leader promoter, and transcribes subsequently all viral mRNAs with a decreasing efficiency. The first gene is the most transcribed, and the last the least transcribed. The viral phosphoprotein acts as a processivity factor. Capping is concomitant with initiation of mRNA transcription. Indeed, a GDP polyribonucleotidyl transferase (PRNTase) adds the cap structure when the nascent RNA chain length has reached few nucleotides. Ribose 2'-O methylation of viral mRNA cap precedes and facilitates subsequent guanine-N-7 methylation, both activities being carried by the viral polymerase. Polyadenylation of mRNAs occur by a stuttering mechanism at a slipery stop site present at the end viral genes. After finishing transcription of a mRNA, the polymerase can resume transcription of the downstream gene.</text>
</comment>
<comment type="function">
    <text evidence="1">RNA-directed RNA polymerase that catalyzes the replication of viral genomic RNA. The template is composed of the viral RNA tightly encapsidated by the nucleoprotein (N). The replicase mode is dependent on intracellular N protein concentration. In this mode, the polymerase replicates the whole viral genome without recognizing transcriptional signals, and the replicated genome is not caped or polyadenylated.</text>
</comment>
<comment type="catalytic activity">
    <reaction evidence="3">
        <text>RNA(n) + a ribonucleoside 5'-triphosphate = RNA(n+1) + diphosphate</text>
        <dbReference type="Rhea" id="RHEA:21248"/>
        <dbReference type="Rhea" id="RHEA-COMP:14527"/>
        <dbReference type="Rhea" id="RHEA-COMP:17342"/>
        <dbReference type="ChEBI" id="CHEBI:33019"/>
        <dbReference type="ChEBI" id="CHEBI:61557"/>
        <dbReference type="ChEBI" id="CHEBI:140395"/>
        <dbReference type="EC" id="2.7.7.48"/>
    </reaction>
</comment>
<comment type="catalytic activity">
    <reaction evidence="1">
        <text>a 5'-end (5'-triphosphoguanosine)-adenylyl-adenylyl-cytidylyl-adenosine in mRNA + 2 S-adenosyl-L-methionine = a 5'-end (N(7)-methyl 5'-triphosphoguanosine)-(2'-O-methyladenylyl)-adenylyl-cytidylyl-adenosine in mRNA + 2 S-adenosyl-L-homocysteine + H(+)</text>
        <dbReference type="Rhea" id="RHEA:65376"/>
        <dbReference type="Rhea" id="RHEA-COMP:16797"/>
        <dbReference type="Rhea" id="RHEA-COMP:16798"/>
        <dbReference type="ChEBI" id="CHEBI:15378"/>
        <dbReference type="ChEBI" id="CHEBI:57856"/>
        <dbReference type="ChEBI" id="CHEBI:59789"/>
        <dbReference type="ChEBI" id="CHEBI:156483"/>
        <dbReference type="ChEBI" id="CHEBI:156484"/>
        <dbReference type="EC" id="2.1.1.375"/>
    </reaction>
</comment>
<comment type="catalytic activity">
    <reaction evidence="1">
        <text>a 5'-end (5'-triphosphoguanosine)-adenylyl-adenylyl-cytidylyl-adenosine in mRNA + S-adenosyl-L-methionine = a 5'-end (5'-triphosphoguanosine)-(2'-O-methyladenylyl)-adenylyl-cytidylyl-adenosine in mRNA + S-adenosyl-L-homocysteine + H(+)</text>
        <dbReference type="Rhea" id="RHEA:65380"/>
        <dbReference type="Rhea" id="RHEA-COMP:16797"/>
        <dbReference type="Rhea" id="RHEA-COMP:16801"/>
        <dbReference type="ChEBI" id="CHEBI:15378"/>
        <dbReference type="ChEBI" id="CHEBI:57856"/>
        <dbReference type="ChEBI" id="CHEBI:59789"/>
        <dbReference type="ChEBI" id="CHEBI:156482"/>
        <dbReference type="ChEBI" id="CHEBI:156484"/>
    </reaction>
</comment>
<comment type="catalytic activity">
    <reaction evidence="2">
        <text>a 5'-end triphospho-adenylyl-adenylyl-cytidylyl-adenosine in mRNA + GDP + H(+) = a 5'-end (5'-triphosphoguanosine)-adenylyl-adenylyl-cytidylyl-adenosine in mRNA + diphosphate</text>
        <dbReference type="Rhea" id="RHEA:65436"/>
        <dbReference type="Rhea" id="RHEA-COMP:16797"/>
        <dbReference type="Rhea" id="RHEA-COMP:16799"/>
        <dbReference type="ChEBI" id="CHEBI:15378"/>
        <dbReference type="ChEBI" id="CHEBI:33019"/>
        <dbReference type="ChEBI" id="CHEBI:58189"/>
        <dbReference type="ChEBI" id="CHEBI:156484"/>
        <dbReference type="ChEBI" id="CHEBI:156503"/>
        <dbReference type="EC" id="2.7.7.88"/>
    </reaction>
</comment>
<comment type="catalytic activity">
    <reaction evidence="1">
        <text>a 5'-end (5'-triphosphoguanosine)-(2'-O-methyladenylyl)-adenylyl-cytidylyl-adenosine in mRNA + S-adenosyl-L-methionine = a 5'-end (N(7)-methyl 5'-triphosphoguanosine)-(2'-O-methyladenylyl)-adenylyl-cytidylyl-adenosine in mRNA + S-adenosyl-L-homocysteine</text>
        <dbReference type="Rhea" id="RHEA:65440"/>
        <dbReference type="Rhea" id="RHEA-COMP:16798"/>
        <dbReference type="Rhea" id="RHEA-COMP:16801"/>
        <dbReference type="ChEBI" id="CHEBI:57856"/>
        <dbReference type="ChEBI" id="CHEBI:59789"/>
        <dbReference type="ChEBI" id="CHEBI:156482"/>
        <dbReference type="ChEBI" id="CHEBI:156483"/>
    </reaction>
</comment>
<comment type="catalytic activity">
    <reaction evidence="2">
        <text>GTP + H2O = GDP + phosphate + H(+)</text>
        <dbReference type="Rhea" id="RHEA:19669"/>
        <dbReference type="ChEBI" id="CHEBI:15377"/>
        <dbReference type="ChEBI" id="CHEBI:15378"/>
        <dbReference type="ChEBI" id="CHEBI:37565"/>
        <dbReference type="ChEBI" id="CHEBI:43474"/>
        <dbReference type="ChEBI" id="CHEBI:58189"/>
    </reaction>
</comment>
<comment type="subunit">
    <text evidence="1">May form homodimer. Interacts with the P protein.</text>
</comment>
<comment type="subcellular location">
    <subcellularLocation>
        <location evidence="1">Virion</location>
    </subcellularLocation>
    <subcellularLocation>
        <location evidence="1">Host cytoplasm</location>
    </subcellularLocation>
    <text evidence="1">L and P are packaged asymmetrically towards the blunt end of the virus.</text>
</comment>
<comment type="similarity">
    <text evidence="4">Belongs to the rhabdoviridae protein L family.</text>
</comment>
<keyword id="KW-0067">ATP-binding</keyword>
<keyword id="KW-1035">Host cytoplasm</keyword>
<keyword id="KW-0378">Hydrolase</keyword>
<keyword id="KW-0489">Methyltransferase</keyword>
<keyword id="KW-0506">mRNA capping</keyword>
<keyword id="KW-0507">mRNA processing</keyword>
<keyword id="KW-0511">Multifunctional enzyme</keyword>
<keyword id="KW-0547">Nucleotide-binding</keyword>
<keyword id="KW-0548">Nucleotidyltransferase</keyword>
<keyword id="KW-1185">Reference proteome</keyword>
<keyword id="KW-0696">RNA-directed RNA polymerase</keyword>
<keyword id="KW-0949">S-adenosyl-L-methionine</keyword>
<keyword id="KW-0808">Transferase</keyword>
<keyword id="KW-0693">Viral RNA replication</keyword>
<keyword id="KW-0946">Virion</keyword>
<name>L_TAVCV</name>
<accession>Q5GA85</accession>
<sequence length="1928" mass="217363">MDSDYPDLDPEALTVLDSIREGIQDEEEEDNNDKILSGTGDYHLKSALRTLDDMTRHPIFNKEYQKAVRHFGISPTMMMTPTAVLKLTVSQTKINKAVGFLFGDILVRLDSLPWAVDCYDSIQAEIKTMHSHMMIFATPSWVEDVHNKVSSLVEYDHDATLIWATVITLKNYLPAWREKGASLLDWRSVQYDPESEYLVMKVDRDFIIYVGSDICVMEIGKQTLWAPVPYILNGADKVAERYNVKYYCALCDELDIPDRISLEKLNQIIEVGDDCLQALGNKGYDIIGSYEALLAGIIQARDNPQVIPDRELLQRTTLNDPGNTIGVTFLKRWDALMEDLNPEQIACAHGLYRIWGHPAVDILGGINKMREVASIVKLPSSKILTDIGRQFKEMFFTSYHSVHKHYPKHLIREYKSDSYIHECLKDNRTLNSKVLSYHFPDWDSVALEKNFEVPYSWNLVHNLKDKAISPSRSELYETLSTRNSIFGASNRRGILKSLTMETVQLRAFLQDVNDKGLPDNDKIIGVYPKERELKIKARLFSLMSFKLRLYFVSTEALLGDKILKYFPQITMSLDMLSMIKKMFRVSGQTTRGDDSVTVIFNLDFVKWNLQMRKIICSPVFTQLGALFGMPNLFDITHDLFRESVIYLCSGEGDLRGDPVFGVAPDGVWSWTGDESGKEGLRQKGWTILTVVTIMLIAKRHHVDVSLMGGGDNQVLGITIGGMVRDSVGELTQDSCKLAQCTIKRFTQDLITTFGDLGLPLKASETWVSDSLFMYNKHMFYKGMPLRSPLKAVSRIFPLANDSIMTLDNMINNISSGVKAACMKERHGIPLVFIKTMAYRRVAELSLIMHPLTVCFKKPELPDHGIVARSGKKLKIPVTSKNLRQYFSLCTLGSSTMGHPGTLHLPDIIMRGFPDPLTSHLSFISEMRRYIVDPGLASVVDKLSHLSTSPTTEYAKLVEDPTSINHDAPTHGLNEIRQMSRDFLMSTTLATNPHLKSLFSLLDRGTEKDFYDALCSAQELDVKVLHEIAGATLYGYTNGIASRIDQTGTVRALNENIDVLRRLALAETRYIGYLMARDTREHDLKPSSCSRITAQQYRDLSWRKPILGVTVPHPMEMCQIMSSTETIYHDAVVCWSDRVSGSEIYQSMGQGKIYQGSYTKERFKATDIAAAYGNEDILVKAVRLQKLINWRYDEGSNFAKIISLTLEAITDANTEGFHRSKEEIKGEFDHRRGVTGDISGGIPNFLVTPTSHFSSTTSSWVSHSRGGKNENIHFQSVLINLLYRAMVYRGSVPGLPEMIWYSKEKCSDCITEIKDPDPIKTTPSLHTLPSAKGNPFAYIESVNVKLDYHHQIEITKGMEEEYLINSLWDGQNVSGEEESGLLLYLMLIGSRQISESFILLMRERINAATALQYMLNRVILARKLGLDSQFPIRSTSCVNLLLGTDDNILSCRDRFNIELLSGSWESGVSCDMSVLYRDDLLTASELHVNVYLQNVPLQLALSRAASSTQLQSCLECQAIVLDRPSQRELMRYLHWCCPYHTANAPPRILRIHSEKLIKGIELRTDNPLLVPYVCNPVTLERVEKVPVMVDSWELPVHMHSTWDSILPQLYLTLKSLLSQVTISSLIVDDDITLINLAASVMLDLRRELPVYINVKGFSGTEINNKFDNLKLLPPNIRSSVSVYHENRSLIEASAAVWLPEPSSVESVGADWLVLWGDTWRMGAGVPGHVLVTESKLSTGMAWVLHRDPLASQSVLELCGAVQIWEKKALDWDMREGHCVPIQMNRTLACSRLGSRGVRWTMWSTAAGLDKVTRILRSKLLSLSGNPGSSYHWRKGCQKILKAYVLSLYAHCVDNMLEASGRLVGVSVHGSLSGIVPICDMHSSDRIQRAQYLFLKERCQGGPFILRNRLERRINLLSPVHDLLDGPSQS</sequence>
<feature type="chain" id="PRO_0000297841" description="RNA-directed RNA polymerase L">
    <location>
        <begin position="1"/>
        <end position="1928"/>
    </location>
</feature>
<feature type="domain" description="RdRp catalytic" evidence="3">
    <location>
        <begin position="596"/>
        <end position="782"/>
    </location>
</feature>
<protein>
    <recommendedName>
        <fullName>RNA-directed RNA polymerase L</fullName>
        <shortName>Protein L</shortName>
    </recommendedName>
    <alternativeName>
        <fullName>Large structural protein</fullName>
    </alternativeName>
    <alternativeName>
        <fullName>Replicase</fullName>
    </alternativeName>
    <alternativeName>
        <fullName>Transcriptase</fullName>
    </alternativeName>
    <domain>
        <recommendedName>
            <fullName>RNA-directed RNA polymerase</fullName>
            <ecNumber evidence="2">2.7.7.48</ecNumber>
        </recommendedName>
    </domain>
    <domain>
        <recommendedName>
            <fullName evidence="1">GTP phosphohydrolase</fullName>
            <ecNumber evidence="1">3.6.1.-</ecNumber>
        </recommendedName>
    </domain>
    <domain>
        <recommendedName>
            <fullName evidence="4">GDP polyribonucleotidyltransferase</fullName>
            <ecNumber evidence="1">2.7.7.88</ecNumber>
        </recommendedName>
        <alternativeName>
            <fullName evidence="4">PRNTase</fullName>
        </alternativeName>
    </domain>
    <domain>
        <recommendedName>
            <fullName evidence="4">mRNA cap methyltransferase</fullName>
            <ecNumber evidence="1">2.1.1.375</ecNumber>
        </recommendedName>
        <alternativeName>
            <fullName evidence="1">mRNA (guanine-N(7)-)-methyltransferase</fullName>
            <shortName evidence="1">G-N7-MTase</shortName>
        </alternativeName>
        <alternativeName>
            <fullName evidence="1">mRNA (nucleoside-2'-O-)-methyltransferase</fullName>
            <shortName evidence="1">N1-2'-O-MTase</shortName>
        </alternativeName>
    </domain>
</protein>
<gene>
    <name type="primary">L</name>
</gene>
<dbReference type="EC" id="2.7.7.48" evidence="2"/>
<dbReference type="EC" id="3.6.1.-" evidence="1"/>
<dbReference type="EC" id="2.7.7.88" evidence="1"/>
<dbReference type="EC" id="2.1.1.375" evidence="1"/>
<dbReference type="EMBL" id="AY674964">
    <property type="protein sequence ID" value="AAV92087.1"/>
    <property type="molecule type" value="Genomic_RNA"/>
</dbReference>
<dbReference type="SMR" id="Q5GA85"/>
<dbReference type="KEGG" id="vg:5076497"/>
<dbReference type="Proteomes" id="UP000007540">
    <property type="component" value="Segment"/>
</dbReference>
<dbReference type="GO" id="GO:0030430">
    <property type="term" value="C:host cell cytoplasm"/>
    <property type="evidence" value="ECO:0007669"/>
    <property type="project" value="UniProtKB-SubCell"/>
</dbReference>
<dbReference type="GO" id="GO:0044423">
    <property type="term" value="C:virion component"/>
    <property type="evidence" value="ECO:0007669"/>
    <property type="project" value="UniProtKB-KW"/>
</dbReference>
<dbReference type="GO" id="GO:0005524">
    <property type="term" value="F:ATP binding"/>
    <property type="evidence" value="ECO:0007669"/>
    <property type="project" value="UniProtKB-KW"/>
</dbReference>
<dbReference type="GO" id="GO:0003924">
    <property type="term" value="F:GTPase activity"/>
    <property type="evidence" value="ECO:0007669"/>
    <property type="project" value="RHEA"/>
</dbReference>
<dbReference type="GO" id="GO:0004482">
    <property type="term" value="F:mRNA 5'-cap (guanine-N7-)-methyltransferase activity"/>
    <property type="evidence" value="ECO:0007669"/>
    <property type="project" value="InterPro"/>
</dbReference>
<dbReference type="GO" id="GO:0003968">
    <property type="term" value="F:RNA-directed RNA polymerase activity"/>
    <property type="evidence" value="ECO:0007669"/>
    <property type="project" value="UniProtKB-KW"/>
</dbReference>
<dbReference type="InterPro" id="IPR039736">
    <property type="entry name" value="L_poly_C"/>
</dbReference>
<dbReference type="InterPro" id="IPR026890">
    <property type="entry name" value="Mononeg_mRNAcap"/>
</dbReference>
<dbReference type="InterPro" id="IPR014023">
    <property type="entry name" value="Mononeg_RNA_pol_cat"/>
</dbReference>
<dbReference type="NCBIfam" id="TIGR04198">
    <property type="entry name" value="paramyx_RNAcap"/>
    <property type="match status" value="1"/>
</dbReference>
<dbReference type="Pfam" id="PF14318">
    <property type="entry name" value="Mononeg_mRNAcap"/>
    <property type="match status" value="1"/>
</dbReference>
<dbReference type="Pfam" id="PF00946">
    <property type="entry name" value="Mononeg_RNA_pol"/>
    <property type="match status" value="1"/>
</dbReference>
<dbReference type="PROSITE" id="PS50526">
    <property type="entry name" value="RDRP_SSRNA_NEG_NONSEG"/>
    <property type="match status" value="1"/>
</dbReference>